<sequence>MVPRSTSLTLIVFLFHRLSKAPGKMVENSPSPLPERAIYGFVLFLSSQFGFILYLVWAFIPESWLNSLGLTYWPQKYWAVALPVYLLIAIVIGYVLLFGINMMSTSPLDSIHTITDNYAKNQQQKKYQEEAIPALRDISISEVNQMFFLAAKELYTKN</sequence>
<evidence type="ECO:0000255" key="1"/>
<evidence type="ECO:0000269" key="2">
    <source>
    </source>
</evidence>
<evidence type="ECO:0000269" key="3">
    <source>
    </source>
</evidence>
<evidence type="ECO:0000269" key="4">
    <source>
    </source>
</evidence>
<evidence type="ECO:0000303" key="5">
    <source>
    </source>
</evidence>
<evidence type="ECO:0000303" key="6">
    <source>
    </source>
</evidence>
<evidence type="ECO:0000303" key="7">
    <source>
    </source>
</evidence>
<evidence type="ECO:0000303" key="8">
    <source>
    </source>
</evidence>
<evidence type="ECO:0000303" key="9">
    <source>
    </source>
</evidence>
<evidence type="ECO:0000303" key="10">
    <source ref="5"/>
</evidence>
<evidence type="ECO:0000305" key="11"/>
<evidence type="ECO:0000312" key="12">
    <source>
        <dbReference type="HGNC" id="HGNC:3046"/>
    </source>
</evidence>
<organism>
    <name type="scientific">Homo sapiens</name>
    <name type="common">Human</name>
    <dbReference type="NCBI Taxonomy" id="9606"/>
    <lineage>
        <taxon>Eukaryota</taxon>
        <taxon>Metazoa</taxon>
        <taxon>Chordata</taxon>
        <taxon>Craniata</taxon>
        <taxon>Vertebrata</taxon>
        <taxon>Euteleostomi</taxon>
        <taxon>Mammalia</taxon>
        <taxon>Eutheria</taxon>
        <taxon>Euarchontoglires</taxon>
        <taxon>Primates</taxon>
        <taxon>Haplorrhini</taxon>
        <taxon>Catarrhini</taxon>
        <taxon>Hominidae</taxon>
        <taxon>Homo</taxon>
    </lineage>
</organism>
<proteinExistence type="evidence at protein level"/>
<gene>
    <name evidence="12" type="primary">PIGP</name>
    <name type="synonym">DCRC</name>
    <name type="synonym">DSCR5</name>
    <name type="synonym">DSCRC</name>
    <name type="ORF">NPD010</name>
</gene>
<reference key="1">
    <citation type="journal article" date="2000" name="Biochem. Biophys. Res. Commun.">
        <title>Isolation of two novel genes, DSCR5 and DSCR6, from Down syndrome critical region on human chromosome 21q22.2.</title>
        <authorList>
            <person name="Shibuya K."/>
            <person name="Kudoh J."/>
            <person name="Minoshima S."/>
            <person name="Kawasaki K."/>
            <person name="Asakawa S."/>
            <person name="Shimizu N."/>
        </authorList>
    </citation>
    <scope>NUCLEOTIDE SEQUENCE [MRNA] (ISOFORMS A; B AND C)</scope>
    <source>
        <tissue>Testis</tissue>
    </source>
</reference>
<reference key="2">
    <citation type="journal article" date="2000" name="DNA Res.">
        <title>A novel gene, DSCR5, from the distal Down syndrome critical region on chromosome 21q22.2.</title>
        <authorList>
            <person name="Togashi T."/>
            <person name="Choi D.-K."/>
            <person name="Taylor T.D."/>
            <person name="Suzuki Y."/>
            <person name="Sugano S."/>
            <person name="Hattori M."/>
            <person name="Sakaki Y."/>
        </authorList>
    </citation>
    <scope>NUCLEOTIDE SEQUENCE [MRNA] (ISOFORMS A; B AND C)</scope>
</reference>
<reference key="3">
    <citation type="journal article" date="2000" name="EMBO J.">
        <title>Initial enzyme for glycosylphosphatidylinositol biosynthesis requires PIG-P and is regulated by DPM2.</title>
        <authorList>
            <person name="Watanabe R."/>
            <person name="Murakami Y."/>
            <person name="Marmor M.D."/>
            <person name="Inoue N."/>
            <person name="Maeda Y."/>
            <person name="Hino J."/>
            <person name="Kangawa K."/>
            <person name="Julius M."/>
            <person name="Kinoshita T."/>
        </authorList>
    </citation>
    <scope>NUCLEOTIDE SEQUENCE [MRNA]</scope>
    <scope>PROTEIN SEQUENCE OF 26-33</scope>
    <scope>FUNCTION (ISOFORM A)</scope>
    <scope>INTERACTION WITH PIGA AND PIGQ</scope>
</reference>
<reference key="4">
    <citation type="submission" date="2000-02" db="EMBL/GenBank/DDBJ databases">
        <authorList>
            <person name="Song H."/>
            <person name="Gao G."/>
            <person name="Peng Y."/>
            <person name="Ren S."/>
            <person name="Chen Z."/>
            <person name="Han Z."/>
        </authorList>
    </citation>
    <scope>NUCLEOTIDE SEQUENCE [LARGE SCALE MRNA] (ISOFORM B)</scope>
    <source>
        <tissue>Pituitary</tissue>
    </source>
</reference>
<reference key="5">
    <citation type="submission" date="2003-05" db="EMBL/GenBank/DDBJ databases">
        <title>Cloning of human full-length CDSs in BD Creator(TM) system donor vector.</title>
        <authorList>
            <person name="Kalnine N."/>
            <person name="Chen X."/>
            <person name="Rolfs A."/>
            <person name="Halleck A."/>
            <person name="Hines L."/>
            <person name="Eisenstein S."/>
            <person name="Koundinya M."/>
            <person name="Raphael J."/>
            <person name="Moreira D."/>
            <person name="Kelley T."/>
            <person name="LaBaer J."/>
            <person name="Lin Y."/>
            <person name="Phelan M."/>
            <person name="Farmer A."/>
        </authorList>
    </citation>
    <scope>NUCLEOTIDE SEQUENCE [LARGE SCALE MRNA] (ISOFORM A)</scope>
</reference>
<reference key="6">
    <citation type="journal article" date="2004" name="Nat. Genet.">
        <title>Complete sequencing and characterization of 21,243 full-length human cDNAs.</title>
        <authorList>
            <person name="Ota T."/>
            <person name="Suzuki Y."/>
            <person name="Nishikawa T."/>
            <person name="Otsuki T."/>
            <person name="Sugiyama T."/>
            <person name="Irie R."/>
            <person name="Wakamatsu A."/>
            <person name="Hayashi K."/>
            <person name="Sato H."/>
            <person name="Nagai K."/>
            <person name="Kimura K."/>
            <person name="Makita H."/>
            <person name="Sekine M."/>
            <person name="Obayashi M."/>
            <person name="Nishi T."/>
            <person name="Shibahara T."/>
            <person name="Tanaka T."/>
            <person name="Ishii S."/>
            <person name="Yamamoto J."/>
            <person name="Saito K."/>
            <person name="Kawai Y."/>
            <person name="Isono Y."/>
            <person name="Nakamura Y."/>
            <person name="Nagahari K."/>
            <person name="Murakami K."/>
            <person name="Yasuda T."/>
            <person name="Iwayanagi T."/>
            <person name="Wagatsuma M."/>
            <person name="Shiratori A."/>
            <person name="Sudo H."/>
            <person name="Hosoiri T."/>
            <person name="Kaku Y."/>
            <person name="Kodaira H."/>
            <person name="Kondo H."/>
            <person name="Sugawara M."/>
            <person name="Takahashi M."/>
            <person name="Kanda K."/>
            <person name="Yokoi T."/>
            <person name="Furuya T."/>
            <person name="Kikkawa E."/>
            <person name="Omura Y."/>
            <person name="Abe K."/>
            <person name="Kamihara K."/>
            <person name="Katsuta N."/>
            <person name="Sato K."/>
            <person name="Tanikawa M."/>
            <person name="Yamazaki M."/>
            <person name="Ninomiya K."/>
            <person name="Ishibashi T."/>
            <person name="Yamashita H."/>
            <person name="Murakawa K."/>
            <person name="Fujimori K."/>
            <person name="Tanai H."/>
            <person name="Kimata M."/>
            <person name="Watanabe M."/>
            <person name="Hiraoka S."/>
            <person name="Chiba Y."/>
            <person name="Ishida S."/>
            <person name="Ono Y."/>
            <person name="Takiguchi S."/>
            <person name="Watanabe S."/>
            <person name="Yosida M."/>
            <person name="Hotuta T."/>
            <person name="Kusano J."/>
            <person name="Kanehori K."/>
            <person name="Takahashi-Fujii A."/>
            <person name="Hara H."/>
            <person name="Tanase T.-O."/>
            <person name="Nomura Y."/>
            <person name="Togiya S."/>
            <person name="Komai F."/>
            <person name="Hara R."/>
            <person name="Takeuchi K."/>
            <person name="Arita M."/>
            <person name="Imose N."/>
            <person name="Musashino K."/>
            <person name="Yuuki H."/>
            <person name="Oshima A."/>
            <person name="Sasaki N."/>
            <person name="Aotsuka S."/>
            <person name="Yoshikawa Y."/>
            <person name="Matsunawa H."/>
            <person name="Ichihara T."/>
            <person name="Shiohata N."/>
            <person name="Sano S."/>
            <person name="Moriya S."/>
            <person name="Momiyama H."/>
            <person name="Satoh N."/>
            <person name="Takami S."/>
            <person name="Terashima Y."/>
            <person name="Suzuki O."/>
            <person name="Nakagawa S."/>
            <person name="Senoh A."/>
            <person name="Mizoguchi H."/>
            <person name="Goto Y."/>
            <person name="Shimizu F."/>
            <person name="Wakebe H."/>
            <person name="Hishigaki H."/>
            <person name="Watanabe T."/>
            <person name="Sugiyama A."/>
            <person name="Takemoto M."/>
            <person name="Kawakami B."/>
            <person name="Yamazaki M."/>
            <person name="Watanabe K."/>
            <person name="Kumagai A."/>
            <person name="Itakura S."/>
            <person name="Fukuzumi Y."/>
            <person name="Fujimori Y."/>
            <person name="Komiyama M."/>
            <person name="Tashiro H."/>
            <person name="Tanigami A."/>
            <person name="Fujiwara T."/>
            <person name="Ono T."/>
            <person name="Yamada K."/>
            <person name="Fujii Y."/>
            <person name="Ozaki K."/>
            <person name="Hirao M."/>
            <person name="Ohmori Y."/>
            <person name="Kawabata A."/>
            <person name="Hikiji T."/>
            <person name="Kobatake N."/>
            <person name="Inagaki H."/>
            <person name="Ikema Y."/>
            <person name="Okamoto S."/>
            <person name="Okitani R."/>
            <person name="Kawakami T."/>
            <person name="Noguchi S."/>
            <person name="Itoh T."/>
            <person name="Shigeta K."/>
            <person name="Senba T."/>
            <person name="Matsumura K."/>
            <person name="Nakajima Y."/>
            <person name="Mizuno T."/>
            <person name="Morinaga M."/>
            <person name="Sasaki M."/>
            <person name="Togashi T."/>
            <person name="Oyama M."/>
            <person name="Hata H."/>
            <person name="Watanabe M."/>
            <person name="Komatsu T."/>
            <person name="Mizushima-Sugano J."/>
            <person name="Satoh T."/>
            <person name="Shirai Y."/>
            <person name="Takahashi Y."/>
            <person name="Nakagawa K."/>
            <person name="Okumura K."/>
            <person name="Nagase T."/>
            <person name="Nomura N."/>
            <person name="Kikuchi H."/>
            <person name="Masuho Y."/>
            <person name="Yamashita R."/>
            <person name="Nakai K."/>
            <person name="Yada T."/>
            <person name="Nakamura Y."/>
            <person name="Ohara O."/>
            <person name="Isogai T."/>
            <person name="Sugano S."/>
        </authorList>
    </citation>
    <scope>NUCLEOTIDE SEQUENCE [LARGE SCALE MRNA] (ISOFORMS A AND B)</scope>
    <source>
        <tissue>Kidney</tissue>
        <tissue>Umbilical cord blood</tissue>
    </source>
</reference>
<reference key="7">
    <citation type="journal article" date="2008" name="Nat. Methods">
        <title>Human protein factory for converting the transcriptome into an in vitro-expressed proteome.</title>
        <authorList>
            <person name="Goshima N."/>
            <person name="Kawamura Y."/>
            <person name="Fukumoto A."/>
            <person name="Miura A."/>
            <person name="Honma R."/>
            <person name="Satoh R."/>
            <person name="Wakamatsu A."/>
            <person name="Yamamoto J."/>
            <person name="Kimura K."/>
            <person name="Nishikawa T."/>
            <person name="Andoh T."/>
            <person name="Iida Y."/>
            <person name="Ishikawa K."/>
            <person name="Ito E."/>
            <person name="Kagawa N."/>
            <person name="Kaminaga C."/>
            <person name="Kanehori K."/>
            <person name="Kawakami B."/>
            <person name="Kenmochi K."/>
            <person name="Kimura R."/>
            <person name="Kobayashi M."/>
            <person name="Kuroita T."/>
            <person name="Kuwayama H."/>
            <person name="Maruyama Y."/>
            <person name="Matsuo K."/>
            <person name="Minami K."/>
            <person name="Mitsubori M."/>
            <person name="Mori M."/>
            <person name="Morishita R."/>
            <person name="Murase A."/>
            <person name="Nishikawa A."/>
            <person name="Nishikawa S."/>
            <person name="Okamoto T."/>
            <person name="Sakagami N."/>
            <person name="Sakamoto Y."/>
            <person name="Sasaki Y."/>
            <person name="Seki T."/>
            <person name="Sono S."/>
            <person name="Sugiyama A."/>
            <person name="Sumiya T."/>
            <person name="Takayama T."/>
            <person name="Takayama Y."/>
            <person name="Takeda H."/>
            <person name="Togashi T."/>
            <person name="Yahata K."/>
            <person name="Yamada H."/>
            <person name="Yanagisawa Y."/>
            <person name="Endo Y."/>
            <person name="Imamoto F."/>
            <person name="Kisu Y."/>
            <person name="Tanaka S."/>
            <person name="Isogai T."/>
            <person name="Imai J."/>
            <person name="Watanabe S."/>
            <person name="Nomura N."/>
        </authorList>
    </citation>
    <scope>NUCLEOTIDE SEQUENCE [LARGE SCALE MRNA] (ISOFORM C)</scope>
</reference>
<reference key="8">
    <citation type="journal article" date="2000" name="Nature">
        <title>The DNA sequence of human chromosome 21.</title>
        <authorList>
            <person name="Hattori M."/>
            <person name="Fujiyama A."/>
            <person name="Taylor T.D."/>
            <person name="Watanabe H."/>
            <person name="Yada T."/>
            <person name="Park H.-S."/>
            <person name="Toyoda A."/>
            <person name="Ishii K."/>
            <person name="Totoki Y."/>
            <person name="Choi D.-K."/>
            <person name="Groner Y."/>
            <person name="Soeda E."/>
            <person name="Ohki M."/>
            <person name="Takagi T."/>
            <person name="Sakaki Y."/>
            <person name="Taudien S."/>
            <person name="Blechschmidt K."/>
            <person name="Polley A."/>
            <person name="Menzel U."/>
            <person name="Delabar J."/>
            <person name="Kumpf K."/>
            <person name="Lehmann R."/>
            <person name="Patterson D."/>
            <person name="Reichwald K."/>
            <person name="Rump A."/>
            <person name="Schillhabel M."/>
            <person name="Schudy A."/>
            <person name="Zimmermann W."/>
            <person name="Rosenthal A."/>
            <person name="Kudoh J."/>
            <person name="Shibuya K."/>
            <person name="Kawasaki K."/>
            <person name="Asakawa S."/>
            <person name="Shintani A."/>
            <person name="Sasaki T."/>
            <person name="Nagamine K."/>
            <person name="Mitsuyama S."/>
            <person name="Antonarakis S.E."/>
            <person name="Minoshima S."/>
            <person name="Shimizu N."/>
            <person name="Nordsiek G."/>
            <person name="Hornischer K."/>
            <person name="Brandt P."/>
            <person name="Scharfe M."/>
            <person name="Schoen O."/>
            <person name="Desario A."/>
            <person name="Reichelt J."/>
            <person name="Kauer G."/>
            <person name="Bloecker H."/>
            <person name="Ramser J."/>
            <person name="Beck A."/>
            <person name="Klages S."/>
            <person name="Hennig S."/>
            <person name="Riesselmann L."/>
            <person name="Dagand E."/>
            <person name="Wehrmeyer S."/>
            <person name="Borzym K."/>
            <person name="Gardiner K."/>
            <person name="Nizetic D."/>
            <person name="Francis F."/>
            <person name="Lehrach H."/>
            <person name="Reinhardt R."/>
            <person name="Yaspo M.-L."/>
        </authorList>
    </citation>
    <scope>NUCLEOTIDE SEQUENCE [LARGE SCALE GENOMIC DNA]</scope>
</reference>
<reference key="9">
    <citation type="submission" date="2005-09" db="EMBL/GenBank/DDBJ databases">
        <authorList>
            <person name="Mural R.J."/>
            <person name="Istrail S."/>
            <person name="Sutton G.G."/>
            <person name="Florea L."/>
            <person name="Halpern A.L."/>
            <person name="Mobarry C.M."/>
            <person name="Lippert R."/>
            <person name="Walenz B."/>
            <person name="Shatkay H."/>
            <person name="Dew I."/>
            <person name="Miller J.R."/>
            <person name="Flanigan M.J."/>
            <person name="Edwards N.J."/>
            <person name="Bolanos R."/>
            <person name="Fasulo D."/>
            <person name="Halldorsson B.V."/>
            <person name="Hannenhalli S."/>
            <person name="Turner R."/>
            <person name="Yooseph S."/>
            <person name="Lu F."/>
            <person name="Nusskern D.R."/>
            <person name="Shue B.C."/>
            <person name="Zheng X.H."/>
            <person name="Zhong F."/>
            <person name="Delcher A.L."/>
            <person name="Huson D.H."/>
            <person name="Kravitz S.A."/>
            <person name="Mouchard L."/>
            <person name="Reinert K."/>
            <person name="Remington K.A."/>
            <person name="Clark A.G."/>
            <person name="Waterman M.S."/>
            <person name="Eichler E.E."/>
            <person name="Adams M.D."/>
            <person name="Hunkapiller M.W."/>
            <person name="Myers E.W."/>
            <person name="Venter J.C."/>
        </authorList>
    </citation>
    <scope>NUCLEOTIDE SEQUENCE [LARGE SCALE GENOMIC DNA]</scope>
</reference>
<reference key="10">
    <citation type="journal article" date="2004" name="Genome Res.">
        <title>The status, quality, and expansion of the NIH full-length cDNA project: the Mammalian Gene Collection (MGC).</title>
        <authorList>
            <consortium name="The MGC Project Team"/>
        </authorList>
    </citation>
    <scope>NUCLEOTIDE SEQUENCE [LARGE SCALE MRNA] (ISOFORM A)</scope>
    <source>
        <tissue>Brain</tissue>
    </source>
</reference>
<reference key="11">
    <citation type="journal article" date="2005" name="Mol. Biol. Cell">
        <title>The initial enzyme for glycosylphosphatidylinositol biosynthesis requires PIG-Y, a seventh component.</title>
        <authorList>
            <person name="Murakami Y."/>
            <person name="Siripanyaphinyo U."/>
            <person name="Hong Y."/>
            <person name="Tashima Y."/>
            <person name="Maeda Y."/>
            <person name="Kinoshita T."/>
        </authorList>
    </citation>
    <scope>COMPONENT OF GPI-GNT COMPLEX</scope>
    <scope>FUNCTION</scope>
</reference>
<reference key="12">
    <citation type="journal article" date="2017" name="Hum. Mol. Genet.">
        <title>Compound heterozygous mutations in the gene PIGP are associated with early infantile epileptic encephalopathy.</title>
        <authorList>
            <consortium name="Care4Rare Canada Consortium"/>
            <person name="Johnstone D.L."/>
            <person name="Nguyen T.T."/>
            <person name="Murakami Y."/>
            <person name="Kernohan K.D."/>
            <person name="Tetreault M."/>
            <person name="Goldsmith C."/>
            <person name="Doja A."/>
            <person name="Wagner J.D."/>
            <person name="Huang L."/>
            <person name="Hartley T."/>
            <person name="St-Denis A."/>
            <person name="le Deist F."/>
            <person name="Majewski J."/>
            <person name="Bulman D.E."/>
            <person name="Kinoshita T."/>
            <person name="Dyment D.A."/>
            <person name="Boycott K.M."/>
            <person name="Campeau P.M."/>
        </authorList>
    </citation>
    <scope>INVOLVEMENT IN DEE55</scope>
    <scope>VARIANT DEE55 THR-25</scope>
    <scope>CHARACTERIZATION OF VARIANT DEE55 THR-25</scope>
    <scope>FUNCTION</scope>
</reference>
<comment type="function">
    <text evidence="2 3 4">Part of the glycosylphosphatidylinositol-N-acetylglucosaminyltransferase (GPI-GnT) complex that catalyzes the transfer of N-acetylglucosamine from UDP-N-acetylglucosamine to phosphatidylinositol and participates in the first step of GPI biosynthesis.</text>
</comment>
<comment type="pathway">
    <text evidence="2 3 4">Glycolipid biosynthesis; glycosylphosphatidylinositol-anchor biosynthesis.</text>
</comment>
<comment type="subunit">
    <text evidence="2 3">Component of the glycosylphosphatidylinositol-N-acetylglucosaminyltransferase (GPI-GnT) complex composed at least by PIGA, PIGC, PIGH, PIGP, PIGQ, PIGY and DPM2 (PubMed:16162815). Interacts directly with PIGA and PIGQ (PubMed:10944123).</text>
</comment>
<comment type="interaction">
    <interactant intactId="EBI-17630288">
        <id>P57054</id>
    </interactant>
    <interactant intactId="EBI-3923585">
        <id>Q8N5I4</id>
        <label>DHRSX</label>
    </interactant>
    <organismsDiffer>false</organismsDiffer>
    <experiments>3</experiments>
</comment>
<comment type="interaction">
    <interactant intactId="EBI-17630288">
        <id>P57054</id>
    </interactant>
    <interactant intactId="EBI-395638">
        <id>O14645</id>
        <label>DNALI1</label>
    </interactant>
    <organismsDiffer>false</organismsDiffer>
    <experiments>3</experiments>
</comment>
<comment type="interaction">
    <interactant intactId="EBI-17630288">
        <id>P57054</id>
    </interactant>
    <interactant intactId="EBI-3385283">
        <id>Q9Y3D6</id>
        <label>FIS1</label>
    </interactant>
    <organismsDiffer>false</organismsDiffer>
    <experiments>3</experiments>
</comment>
<comment type="interaction">
    <interactant intactId="EBI-17630288">
        <id>P57054</id>
    </interactant>
    <interactant intactId="EBI-725665">
        <id>Q9Y5U9</id>
        <label>IER3IP1</label>
    </interactant>
    <organismsDiffer>false</organismsDiffer>
    <experiments>3</experiments>
</comment>
<comment type="interaction">
    <interactant intactId="EBI-17630288">
        <id>P57054</id>
    </interactant>
    <interactant intactId="EBI-2568251">
        <id>P11215</id>
        <label>ITGAM</label>
    </interactant>
    <organismsDiffer>false</organismsDiffer>
    <experiments>3</experiments>
</comment>
<comment type="interaction">
    <interactant intactId="EBI-17630288">
        <id>P57054</id>
    </interactant>
    <interactant intactId="EBI-948266">
        <id>O14901</id>
        <label>KLF11</label>
    </interactant>
    <organismsDiffer>false</organismsDiffer>
    <experiments>3</experiments>
</comment>
<comment type="interaction">
    <interactant intactId="EBI-17630288">
        <id>P57054</id>
    </interactant>
    <interactant intactId="EBI-12925734">
        <id>Q86UP9</id>
        <label>LHFPL3</label>
    </interactant>
    <organismsDiffer>false</organismsDiffer>
    <experiments>3</experiments>
</comment>
<comment type="interaction">
    <interactant intactId="EBI-17630288">
        <id>P57054</id>
    </interactant>
    <interactant intactId="EBI-10317425">
        <id>Q9NZG7</id>
        <label>NINJ2</label>
    </interactant>
    <organismsDiffer>false</organismsDiffer>
    <experiments>3</experiments>
</comment>
<comment type="interaction">
    <interactant intactId="EBI-17630288">
        <id>P57054</id>
    </interactant>
    <interactant intactId="EBI-2811583">
        <id>Q9BVL2</id>
        <label>NUP58</label>
    </interactant>
    <organismsDiffer>false</organismsDiffer>
    <experiments>3</experiments>
</comment>
<comment type="interaction">
    <interactant intactId="EBI-17630288">
        <id>P57054</id>
    </interactant>
    <interactant intactId="EBI-26643054">
        <id>P37287</id>
        <label>PIGA</label>
    </interactant>
    <organismsDiffer>false</organismsDiffer>
    <experiments>6</experiments>
</comment>
<comment type="interaction">
    <interactant intactId="EBI-17630288">
        <id>P57054</id>
    </interactant>
    <interactant intactId="EBI-12188331">
        <id>P60201-2</id>
        <label>PLP1</label>
    </interactant>
    <organismsDiffer>false</organismsDiffer>
    <experiments>3</experiments>
</comment>
<comment type="interaction">
    <interactant intactId="EBI-17630288">
        <id>P57054</id>
    </interactant>
    <interactant intactId="EBI-608347">
        <id>Q04941</id>
        <label>PLP2</label>
    </interactant>
    <organismsDiffer>false</organismsDiffer>
    <experiments>3</experiments>
</comment>
<comment type="interaction">
    <interactant intactId="EBI-17630288">
        <id>P57054</id>
    </interactant>
    <interactant intactId="EBI-968788">
        <id>P18031</id>
        <label>PTPN1</label>
    </interactant>
    <organismsDiffer>false</organismsDiffer>
    <experiments>3</experiments>
</comment>
<comment type="interaction">
    <interactant intactId="EBI-17630288">
        <id>P57054</id>
    </interactant>
    <interactant intactId="EBI-2695784">
        <id>Q8TAC9</id>
        <label>SCAMP5</label>
    </interactant>
    <organismsDiffer>false</organismsDiffer>
    <experiments>3</experiments>
</comment>
<comment type="interaction">
    <interactant intactId="EBI-17630288">
        <id>P57054</id>
    </interactant>
    <interactant intactId="EBI-10226799">
        <id>Q0VAQ4</id>
        <label>SMAGP</label>
    </interactant>
    <organismsDiffer>false</organismsDiffer>
    <experiments>3</experiments>
</comment>
<comment type="interaction">
    <interactant intactId="EBI-17630288">
        <id>P57054</id>
    </interactant>
    <interactant intactId="EBI-311394">
        <id>Q9C0I4</id>
        <label>THSD7B</label>
    </interactant>
    <organismsDiffer>false</organismsDiffer>
    <experiments>3</experiments>
</comment>
<comment type="interaction">
    <interactant intactId="EBI-17630288">
        <id>P57054</id>
    </interactant>
    <interactant intactId="EBI-12845616">
        <id>Q6UX40</id>
        <label>TMEM107</label>
    </interactant>
    <organismsDiffer>false</organismsDiffer>
    <experiments>3</experiments>
</comment>
<comment type="interaction">
    <interactant intactId="EBI-17630288">
        <id>P57054</id>
    </interactant>
    <interactant intactId="EBI-741829">
        <id>Q96HH6</id>
        <label>TMEM19</label>
    </interactant>
    <organismsDiffer>false</organismsDiffer>
    <experiments>3</experiments>
</comment>
<comment type="interaction">
    <interactant intactId="EBI-17630288">
        <id>P57054</id>
    </interactant>
    <interactant intactId="EBI-12195227">
        <id>Q8NBD8</id>
        <label>TMEM229B</label>
    </interactant>
    <organismsDiffer>false</organismsDiffer>
    <experiments>3</experiments>
</comment>
<comment type="interaction">
    <interactant intactId="EBI-17630288">
        <id>P57054</id>
    </interactant>
    <interactant intactId="EBI-2819725">
        <id>Q9Y5Z9</id>
        <label>UBIAD1</label>
    </interactant>
    <organismsDiffer>false</organismsDiffer>
    <experiments>3</experiments>
</comment>
<comment type="subcellular location">
    <subcellularLocation>
        <location evidence="11">Membrane</location>
        <topology evidence="11">Multi-pass membrane protein</topology>
    </subcellularLocation>
</comment>
<comment type="alternative products">
    <event type="alternative splicing"/>
    <isoform>
        <id>P57054-1</id>
        <name>B</name>
        <sequence type="displayed"/>
    </isoform>
    <isoform>
        <id>P57054-2</id>
        <name>A</name>
        <sequence type="described" ref="VSP_004202"/>
    </isoform>
    <isoform>
        <id>P57054-3</id>
        <name>C</name>
        <name>DCRC-S</name>
        <sequence type="described" ref="VSP_004203 VSP_004204"/>
    </isoform>
</comment>
<comment type="tissue specificity">
    <text>Ubiquitous.</text>
</comment>
<comment type="disease" evidence="4">
    <disease id="DI-05060">
        <name>Developmental and epileptic encephalopathy 55</name>
        <acronym>DEE55</acronym>
        <description>A form of epileptic encephalopathy, a heterogeneous group of severe early-onset epilepsies characterized by refractory seizures, neurodevelopmental impairment, and poor prognosis. Development is normal prior to seizure onset, after which cognitive and motor delays become apparent. DEE55 is an autosomal recessive condition.</description>
        <dbReference type="MIM" id="617599"/>
    </disease>
    <text>The disease is caused by variants affecting the gene represented in this entry.</text>
</comment>
<comment type="similarity">
    <text evidence="11">Belongs to the PIGP family.</text>
</comment>
<dbReference type="EMBL" id="AB037162">
    <property type="protein sequence ID" value="BAA96871.1"/>
    <property type="molecule type" value="mRNA"/>
</dbReference>
<dbReference type="EMBL" id="AB037163">
    <property type="protein sequence ID" value="BAA96872.1"/>
    <property type="molecule type" value="mRNA"/>
</dbReference>
<dbReference type="EMBL" id="AB037164">
    <property type="protein sequence ID" value="BAA96873.1"/>
    <property type="molecule type" value="mRNA"/>
</dbReference>
<dbReference type="EMBL" id="AB035742">
    <property type="protein sequence ID" value="BAA95633.1"/>
    <property type="molecule type" value="mRNA"/>
</dbReference>
<dbReference type="EMBL" id="AB035743">
    <property type="protein sequence ID" value="BAA95634.1"/>
    <property type="molecule type" value="mRNA"/>
</dbReference>
<dbReference type="EMBL" id="AB035744">
    <property type="protein sequence ID" value="BAA95635.1"/>
    <property type="molecule type" value="mRNA"/>
</dbReference>
<dbReference type="EMBL" id="AB035745">
    <property type="protein sequence ID" value="BAA95636.1"/>
    <property type="molecule type" value="mRNA"/>
</dbReference>
<dbReference type="EMBL" id="AF216305">
    <property type="protein sequence ID" value="AAF32289.1"/>
    <property type="molecule type" value="mRNA"/>
</dbReference>
<dbReference type="EMBL" id="AB039659">
    <property type="protein sequence ID" value="BAB12395.1"/>
    <property type="molecule type" value="mRNA"/>
</dbReference>
<dbReference type="EMBL" id="AF237812">
    <property type="protein sequence ID" value="AAG09757.1"/>
    <property type="molecule type" value="mRNA"/>
</dbReference>
<dbReference type="EMBL" id="BT007053">
    <property type="protein sequence ID" value="AAP35702.1"/>
    <property type="molecule type" value="mRNA"/>
</dbReference>
<dbReference type="EMBL" id="AK314457">
    <property type="protein sequence ID" value="BAG37065.1"/>
    <property type="molecule type" value="mRNA"/>
</dbReference>
<dbReference type="EMBL" id="AK316609">
    <property type="protein sequence ID" value="BAG38196.1"/>
    <property type="molecule type" value="mRNA"/>
</dbReference>
<dbReference type="EMBL" id="AB451328">
    <property type="protein sequence ID" value="BAG70142.1"/>
    <property type="molecule type" value="mRNA"/>
</dbReference>
<dbReference type="EMBL" id="AB451472">
    <property type="protein sequence ID" value="BAG70286.1"/>
    <property type="molecule type" value="mRNA"/>
</dbReference>
<dbReference type="EMBL" id="AP000704">
    <property type="status" value="NOT_ANNOTATED_CDS"/>
    <property type="molecule type" value="Genomic_DNA"/>
</dbReference>
<dbReference type="EMBL" id="AP001429">
    <property type="status" value="NOT_ANNOTATED_CDS"/>
    <property type="molecule type" value="Genomic_DNA"/>
</dbReference>
<dbReference type="EMBL" id="AP001431">
    <property type="status" value="NOT_ANNOTATED_CDS"/>
    <property type="molecule type" value="Genomic_DNA"/>
</dbReference>
<dbReference type="EMBL" id="AP001727">
    <property type="protein sequence ID" value="BAA95512.1"/>
    <property type="molecule type" value="Genomic_DNA"/>
</dbReference>
<dbReference type="EMBL" id="KC877872">
    <property type="status" value="NOT_ANNOTATED_CDS"/>
    <property type="molecule type" value="Genomic_DNA"/>
</dbReference>
<dbReference type="EMBL" id="CH471079">
    <property type="protein sequence ID" value="EAX09724.1"/>
    <property type="molecule type" value="Genomic_DNA"/>
</dbReference>
<dbReference type="EMBL" id="CH471079">
    <property type="protein sequence ID" value="EAX09725.1"/>
    <property type="molecule type" value="Genomic_DNA"/>
</dbReference>
<dbReference type="EMBL" id="CH471079">
    <property type="protein sequence ID" value="EAX09727.1"/>
    <property type="molecule type" value="Genomic_DNA"/>
</dbReference>
<dbReference type="EMBL" id="CH471079">
    <property type="protein sequence ID" value="EAX09726.1"/>
    <property type="molecule type" value="Genomic_DNA"/>
</dbReference>
<dbReference type="EMBL" id="CH471079">
    <property type="protein sequence ID" value="EAX09728.1"/>
    <property type="molecule type" value="Genomic_DNA"/>
</dbReference>
<dbReference type="EMBL" id="BC005180">
    <property type="protein sequence ID" value="AAH05180.1"/>
    <property type="molecule type" value="mRNA"/>
</dbReference>
<dbReference type="EMBL" id="BC011007">
    <property type="protein sequence ID" value="AAH11007.1"/>
    <property type="molecule type" value="mRNA"/>
</dbReference>
<dbReference type="CCDS" id="CCDS13649.1">
    <molecule id="P57054-1"/>
</dbReference>
<dbReference type="CCDS" id="CCDS13650.1">
    <molecule id="P57054-2"/>
</dbReference>
<dbReference type="CCDS" id="CCDS82670.1">
    <molecule id="P57054-3"/>
</dbReference>
<dbReference type="PIR" id="JC7301">
    <property type="entry name" value="JC7301"/>
</dbReference>
<dbReference type="PIR" id="JC7302">
    <property type="entry name" value="JC7302"/>
</dbReference>
<dbReference type="RefSeq" id="NP_001307409.1">
    <molecule id="P57054-2"/>
    <property type="nucleotide sequence ID" value="NM_001320480.2"/>
</dbReference>
<dbReference type="RefSeq" id="NP_057514.2">
    <molecule id="P57054-3"/>
    <property type="nucleotide sequence ID" value="NM_016430.3"/>
</dbReference>
<dbReference type="RefSeq" id="NP_710148.1">
    <molecule id="P57054-1"/>
    <property type="nucleotide sequence ID" value="NM_153681.2"/>
</dbReference>
<dbReference type="RefSeq" id="NP_710149.1">
    <molecule id="P57054-2"/>
    <property type="nucleotide sequence ID" value="NM_153682.3"/>
</dbReference>
<dbReference type="RefSeq" id="XP_005261047.1">
    <property type="nucleotide sequence ID" value="XM_005260990.4"/>
</dbReference>
<dbReference type="RefSeq" id="XP_011527898.1">
    <property type="nucleotide sequence ID" value="XM_011529596.2"/>
</dbReference>
<dbReference type="RefSeq" id="XP_016883853.1">
    <property type="nucleotide sequence ID" value="XM_017028364.1"/>
</dbReference>
<dbReference type="RefSeq" id="XP_016883854.1">
    <property type="nucleotide sequence ID" value="XM_017028365.1"/>
</dbReference>
<dbReference type="BioGRID" id="119391">
    <property type="interactions" value="37"/>
</dbReference>
<dbReference type="ComplexPortal" id="CPX-6502">
    <property type="entry name" value="Glycosylphosphatidylinositol-N-acetylglucosaminyltransferase complex"/>
</dbReference>
<dbReference type="FunCoup" id="P57054">
    <property type="interactions" value="467"/>
</dbReference>
<dbReference type="IntAct" id="P57054">
    <property type="interactions" value="33"/>
</dbReference>
<dbReference type="STRING" id="9606.ENSP00000420037"/>
<dbReference type="iPTMnet" id="P57054"/>
<dbReference type="PhosphoSitePlus" id="P57054"/>
<dbReference type="BioMuta" id="PIGP"/>
<dbReference type="DMDM" id="425906062"/>
<dbReference type="jPOST" id="P57054"/>
<dbReference type="MassIVE" id="P57054"/>
<dbReference type="PaxDb" id="9606-ENSP00000420037"/>
<dbReference type="PeptideAtlas" id="P57054"/>
<dbReference type="ProteomicsDB" id="56970">
    <molecule id="P57054-1"/>
</dbReference>
<dbReference type="ProteomicsDB" id="56971">
    <molecule id="P57054-2"/>
</dbReference>
<dbReference type="ProteomicsDB" id="56972">
    <molecule id="P57054-3"/>
</dbReference>
<dbReference type="Pumba" id="P57054"/>
<dbReference type="TopDownProteomics" id="P57054-2">
    <molecule id="P57054-2"/>
</dbReference>
<dbReference type="TopDownProteomics" id="P57054-3">
    <molecule id="P57054-3"/>
</dbReference>
<dbReference type="Antibodypedia" id="8411">
    <property type="antibodies" value="122 antibodies from 23 providers"/>
</dbReference>
<dbReference type="DNASU" id="51227"/>
<dbReference type="Ensembl" id="ENST00000360525.9">
    <molecule id="P57054-2"/>
    <property type="protein sequence ID" value="ENSP00000353719.3"/>
    <property type="gene ID" value="ENSG00000185808.14"/>
</dbReference>
<dbReference type="Ensembl" id="ENST00000399098.5">
    <molecule id="P57054-3"/>
    <property type="protein sequence ID" value="ENSP00000382049.1"/>
    <property type="gene ID" value="ENSG00000185808.14"/>
</dbReference>
<dbReference type="Ensembl" id="ENST00000399102.5">
    <molecule id="P57054-2"/>
    <property type="protein sequence ID" value="ENSP00000382053.1"/>
    <property type="gene ID" value="ENSG00000185808.14"/>
</dbReference>
<dbReference type="Ensembl" id="ENST00000399103.5">
    <molecule id="P57054-2"/>
    <property type="protein sequence ID" value="ENSP00000382054.1"/>
    <property type="gene ID" value="ENSG00000185808.14"/>
</dbReference>
<dbReference type="Ensembl" id="ENST00000464265.5">
    <molecule id="P57054-1"/>
    <property type="protein sequence ID" value="ENSP00000420037.1"/>
    <property type="gene ID" value="ENSG00000185808.14"/>
</dbReference>
<dbReference type="GeneID" id="51227"/>
<dbReference type="KEGG" id="hsa:51227"/>
<dbReference type="MANE-Select" id="ENST00000360525.9">
    <molecule id="P57054-2"/>
    <property type="protein sequence ID" value="ENSP00000353719.3"/>
    <property type="RefSeq nucleotide sequence ID" value="NM_153682.3"/>
    <property type="RefSeq protein sequence ID" value="NP_710149.1"/>
</dbReference>
<dbReference type="UCSC" id="uc002yvw.2">
    <molecule id="P57054-1"/>
    <property type="organism name" value="human"/>
</dbReference>
<dbReference type="AGR" id="HGNC:3046"/>
<dbReference type="CTD" id="51227"/>
<dbReference type="DisGeNET" id="51227"/>
<dbReference type="GeneCards" id="PIGP"/>
<dbReference type="HGNC" id="HGNC:3046">
    <property type="gene designation" value="PIGP"/>
</dbReference>
<dbReference type="HPA" id="ENSG00000185808">
    <property type="expression patterns" value="Low tissue specificity"/>
</dbReference>
<dbReference type="MalaCards" id="PIGP"/>
<dbReference type="MIM" id="605938">
    <property type="type" value="gene"/>
</dbReference>
<dbReference type="MIM" id="617599">
    <property type="type" value="phenotype"/>
</dbReference>
<dbReference type="neXtProt" id="NX_P57054"/>
<dbReference type="OpenTargets" id="ENSG00000185808"/>
<dbReference type="Orphanet" id="1934">
    <property type="disease" value="Early infantile developmental and epileptic encephalopathy"/>
</dbReference>
<dbReference type="PharmGKB" id="PA27498"/>
<dbReference type="VEuPathDB" id="HostDB:ENSG00000185808"/>
<dbReference type="eggNOG" id="KOG2257">
    <property type="taxonomic scope" value="Eukaryota"/>
</dbReference>
<dbReference type="GeneTree" id="ENSGT00390000013771"/>
<dbReference type="HOGENOM" id="CLU_081616_2_1_1"/>
<dbReference type="InParanoid" id="P57054"/>
<dbReference type="OrthoDB" id="690928at2759"/>
<dbReference type="PAN-GO" id="P57054">
    <property type="GO annotations" value="3 GO annotations based on evolutionary models"/>
</dbReference>
<dbReference type="PhylomeDB" id="P57054"/>
<dbReference type="TreeFam" id="TF323799"/>
<dbReference type="BRENDA" id="2.4.1.198">
    <property type="organism ID" value="2681"/>
</dbReference>
<dbReference type="PathwayCommons" id="P57054"/>
<dbReference type="Reactome" id="R-HSA-162710">
    <property type="pathway name" value="Synthesis of glycosylphosphatidylinositol (GPI)"/>
</dbReference>
<dbReference type="SignaLink" id="P57054"/>
<dbReference type="UniPathway" id="UPA00196"/>
<dbReference type="BioGRID-ORCS" id="51227">
    <property type="hits" value="18 hits in 1149 CRISPR screens"/>
</dbReference>
<dbReference type="ChiTaRS" id="PIGP">
    <property type="organism name" value="human"/>
</dbReference>
<dbReference type="GeneWiki" id="PIGP"/>
<dbReference type="GenomeRNAi" id="51227"/>
<dbReference type="Pharos" id="P57054">
    <property type="development level" value="Tbio"/>
</dbReference>
<dbReference type="PRO" id="PR:P57054"/>
<dbReference type="Proteomes" id="UP000005640">
    <property type="component" value="Chromosome 21"/>
</dbReference>
<dbReference type="RNAct" id="P57054">
    <property type="molecule type" value="protein"/>
</dbReference>
<dbReference type="Bgee" id="ENSG00000185808">
    <property type="expression patterns" value="Expressed in corpus epididymis and 208 other cell types or tissues"/>
</dbReference>
<dbReference type="ExpressionAtlas" id="P57054">
    <property type="expression patterns" value="baseline and differential"/>
</dbReference>
<dbReference type="GO" id="GO:0005783">
    <property type="term" value="C:endoplasmic reticulum"/>
    <property type="evidence" value="ECO:0000318"/>
    <property type="project" value="GO_Central"/>
</dbReference>
<dbReference type="GO" id="GO:0005789">
    <property type="term" value="C:endoplasmic reticulum membrane"/>
    <property type="evidence" value="ECO:0000314"/>
    <property type="project" value="ComplexPortal"/>
</dbReference>
<dbReference type="GO" id="GO:0000506">
    <property type="term" value="C:glycosylphosphatidylinositol-N-acetylglucosaminyltransferase (GPI-GnT) complex"/>
    <property type="evidence" value="ECO:0000314"/>
    <property type="project" value="UniProtKB"/>
</dbReference>
<dbReference type="GO" id="GO:0017176">
    <property type="term" value="F:phosphatidylinositol N-acetylglucosaminyltransferase activity"/>
    <property type="evidence" value="ECO:0007669"/>
    <property type="project" value="InterPro"/>
</dbReference>
<dbReference type="GO" id="GO:0006506">
    <property type="term" value="P:GPI anchor biosynthetic process"/>
    <property type="evidence" value="ECO:0000314"/>
    <property type="project" value="UniProtKB"/>
</dbReference>
<dbReference type="InterPro" id="IPR052263">
    <property type="entry name" value="GPI_Anchor_Biosynth"/>
</dbReference>
<dbReference type="InterPro" id="IPR013717">
    <property type="entry name" value="PIG-P"/>
</dbReference>
<dbReference type="InterPro" id="IPR016542">
    <property type="entry name" value="PIG-P_GPI19"/>
</dbReference>
<dbReference type="PANTHER" id="PTHR46346">
    <property type="entry name" value="PHOSPHATIDYLINOSITOL N-ACETYLGLUCOSAMINYLTRANSFERASE SUBUNIT P"/>
    <property type="match status" value="1"/>
</dbReference>
<dbReference type="PANTHER" id="PTHR46346:SF1">
    <property type="entry name" value="PHOSPHATIDYLINOSITOL N-ACETYLGLUCOSAMINYLTRANSFERASE SUBUNIT P"/>
    <property type="match status" value="1"/>
</dbReference>
<dbReference type="Pfam" id="PF08510">
    <property type="entry name" value="PIG-P"/>
    <property type="match status" value="1"/>
</dbReference>
<dbReference type="PIRSF" id="PIRSF008765">
    <property type="entry name" value="PIG-P_GPI19"/>
    <property type="match status" value="1"/>
</dbReference>
<name>PIGP_HUMAN</name>
<accession>P57054</accession>
<accession>A0A0C4DH71</accession>
<accession>B2RB18</accession>
<accession>B2RE99</accession>
<accession>B5BU92</accession>
<accession>D3DSG7</accession>
<accession>J3KR75</accession>
<accession>Q53Y28</accession>
<accession>Q96KI1</accession>
<accession>Q9NZA6</accession>
<protein>
    <recommendedName>
        <fullName evidence="11">Phosphatidylinositol N-acetylglucosaminyltransferase subunit P</fullName>
    </recommendedName>
    <alternativeName>
        <fullName>Down syndrome critical region protein 5</fullName>
    </alternativeName>
    <alternativeName>
        <fullName>Down syndrome critical region protein C</fullName>
    </alternativeName>
    <alternativeName>
        <fullName>Phosphatidylinositol-glycan biosynthesis class P protein</fullName>
        <shortName>PIG-P</shortName>
    </alternativeName>
</protein>
<feature type="chain" id="PRO_0000191783" description="Phosphatidylinositol N-acetylglucosaminyltransferase subunit P">
    <location>
        <begin position="1"/>
        <end position="158"/>
    </location>
</feature>
<feature type="transmembrane region" description="Helical" evidence="1">
    <location>
        <begin position="40"/>
        <end position="60"/>
    </location>
</feature>
<feature type="transmembrane region" description="Helical" evidence="1">
    <location>
        <begin position="80"/>
        <end position="100"/>
    </location>
</feature>
<feature type="splice variant" id="VSP_004203" description="In isoform C." evidence="5 6 9">
    <location>
        <begin position="1"/>
        <end position="50"/>
    </location>
</feature>
<feature type="splice variant" id="VSP_004202" description="In isoform A." evidence="5 6 7 8 10">
    <location>
        <begin position="1"/>
        <end position="24"/>
    </location>
</feature>
<feature type="splice variant" id="VSP_004204" description="In isoform C." evidence="5 6 9">
    <original>FI</original>
    <variation>MV</variation>
    <location>
        <begin position="51"/>
        <end position="52"/>
    </location>
</feature>
<feature type="sequence variant" id="VAR_061521" description="In dbSNP:rs2507733.">
    <original>T</original>
    <variation>A</variation>
    <location>
        <position position="9"/>
    </location>
</feature>
<feature type="sequence variant" id="VAR_079291" description="In DEE55; reduced GPI-anchor biosynthetic process; may affect expression of isoform A; dbSNP:rs768633670." evidence="4">
    <original>M</original>
    <variation>T</variation>
    <location>
        <position position="25"/>
    </location>
</feature>
<feature type="sequence variant" id="VAR_050538" description="In dbSNP:rs16994704.">
    <original>Y</original>
    <variation>C</variation>
    <location>
        <position position="118"/>
    </location>
</feature>
<feature type="sequence variant" id="VAR_050539" description="In dbSNP:rs2276231.">
    <original>R</original>
    <variation>S</variation>
    <location>
        <position position="136"/>
    </location>
</feature>
<feature type="sequence conflict" description="In Ref. 1; BAA96872." evidence="11" ref="1">
    <original>P</original>
    <variation>S</variation>
    <location>
        <position position="3"/>
    </location>
</feature>
<feature type="sequence conflict" description="In Ref. 1; BAA96873 and 2; AAF32289." evidence="11" ref="1 2">
    <original>I</original>
    <variation>V</variation>
    <location>
        <position position="90"/>
    </location>
</feature>
<keyword id="KW-0025">Alternative splicing</keyword>
<keyword id="KW-0903">Direct protein sequencing</keyword>
<keyword id="KW-0225">Disease variant</keyword>
<keyword id="KW-0887">Epilepsy</keyword>
<keyword id="KW-0337">GPI-anchor biosynthesis</keyword>
<keyword id="KW-0472">Membrane</keyword>
<keyword id="KW-1267">Proteomics identification</keyword>
<keyword id="KW-1185">Reference proteome</keyword>
<keyword id="KW-0812">Transmembrane</keyword>
<keyword id="KW-1133">Transmembrane helix</keyword>